<protein>
    <recommendedName>
        <fullName evidence="1">UPF0250 protein PputW619_0619</fullName>
    </recommendedName>
</protein>
<reference key="1">
    <citation type="submission" date="2008-02" db="EMBL/GenBank/DDBJ databases">
        <title>Complete sequence of Pseudomonas putida W619.</title>
        <authorList>
            <person name="Copeland A."/>
            <person name="Lucas S."/>
            <person name="Lapidus A."/>
            <person name="Barry K."/>
            <person name="Detter J.C."/>
            <person name="Glavina del Rio T."/>
            <person name="Dalin E."/>
            <person name="Tice H."/>
            <person name="Pitluck S."/>
            <person name="Chain P."/>
            <person name="Malfatti S."/>
            <person name="Shin M."/>
            <person name="Vergez L."/>
            <person name="Schmutz J."/>
            <person name="Larimer F."/>
            <person name="Land M."/>
            <person name="Hauser L."/>
            <person name="Kyrpides N."/>
            <person name="Kim E."/>
            <person name="Taghavi S."/>
            <person name="Vangronsveld D."/>
            <person name="van der Lelie D."/>
            <person name="Richardson P."/>
        </authorList>
    </citation>
    <scope>NUCLEOTIDE SEQUENCE [LARGE SCALE GENOMIC DNA]</scope>
    <source>
        <strain>W619</strain>
    </source>
</reference>
<feature type="chain" id="PRO_1000131252" description="UPF0250 protein PputW619_0619">
    <location>
        <begin position="1"/>
        <end position="91"/>
    </location>
</feature>
<sequence>MSEPDVKSHKIEFPCADYPIKVIGDTVVGFKDMVIEVLSKHAKVDLATLAERQSKEGKYTTVQLHIVAESENQLHDINSALRATGIVKMVL</sequence>
<name>Y619_PSEPW</name>
<gene>
    <name type="ordered locus">PputW619_0619</name>
</gene>
<organism>
    <name type="scientific">Pseudomonas putida (strain W619)</name>
    <dbReference type="NCBI Taxonomy" id="390235"/>
    <lineage>
        <taxon>Bacteria</taxon>
        <taxon>Pseudomonadati</taxon>
        <taxon>Pseudomonadota</taxon>
        <taxon>Gammaproteobacteria</taxon>
        <taxon>Pseudomonadales</taxon>
        <taxon>Pseudomonadaceae</taxon>
        <taxon>Pseudomonas</taxon>
    </lineage>
</organism>
<proteinExistence type="inferred from homology"/>
<accession>B1J142</accession>
<evidence type="ECO:0000255" key="1">
    <source>
        <dbReference type="HAMAP-Rule" id="MF_00659"/>
    </source>
</evidence>
<comment type="similarity">
    <text evidence="1">Belongs to the UPF0250 family.</text>
</comment>
<dbReference type="EMBL" id="CP000949">
    <property type="protein sequence ID" value="ACA71124.1"/>
    <property type="molecule type" value="Genomic_DNA"/>
</dbReference>
<dbReference type="SMR" id="B1J142"/>
<dbReference type="STRING" id="390235.PputW619_0619"/>
<dbReference type="KEGG" id="ppw:PputW619_0619"/>
<dbReference type="eggNOG" id="COG2921">
    <property type="taxonomic scope" value="Bacteria"/>
</dbReference>
<dbReference type="HOGENOM" id="CLU_161438_1_0_6"/>
<dbReference type="OrthoDB" id="9793424at2"/>
<dbReference type="GO" id="GO:0005829">
    <property type="term" value="C:cytosol"/>
    <property type="evidence" value="ECO:0007669"/>
    <property type="project" value="TreeGrafter"/>
</dbReference>
<dbReference type="Gene3D" id="3.30.70.260">
    <property type="match status" value="1"/>
</dbReference>
<dbReference type="HAMAP" id="MF_00659">
    <property type="entry name" value="UPF0250"/>
    <property type="match status" value="1"/>
</dbReference>
<dbReference type="InterPro" id="IPR007454">
    <property type="entry name" value="UPF0250_YbeD-like"/>
</dbReference>
<dbReference type="InterPro" id="IPR027471">
    <property type="entry name" value="YbeD-like_sf"/>
</dbReference>
<dbReference type="NCBIfam" id="NF001486">
    <property type="entry name" value="PRK00341.1"/>
    <property type="match status" value="1"/>
</dbReference>
<dbReference type="PANTHER" id="PTHR38036">
    <property type="entry name" value="UPF0250 PROTEIN YBED"/>
    <property type="match status" value="1"/>
</dbReference>
<dbReference type="PANTHER" id="PTHR38036:SF1">
    <property type="entry name" value="UPF0250 PROTEIN YBED"/>
    <property type="match status" value="1"/>
</dbReference>
<dbReference type="Pfam" id="PF04359">
    <property type="entry name" value="DUF493"/>
    <property type="match status" value="1"/>
</dbReference>
<dbReference type="SUPFAM" id="SSF117991">
    <property type="entry name" value="YbeD/HP0495-like"/>
    <property type="match status" value="1"/>
</dbReference>